<feature type="chain" id="PRO_0000357358" description="Enolase-phosphatase E1">
    <location>
        <begin position="1"/>
        <end position="223"/>
    </location>
</feature>
<name>MTNC_AQUAE</name>
<comment type="function">
    <text evidence="1">Bifunctional enzyme that catalyzes the enolization of 2,3-diketo-5-methylthiopentyl-1-phosphate (DK-MTP-1-P) into the intermediate 2-hydroxy-3-keto-5-methylthiopentenyl-1-phosphate (HK-MTPenyl-1-P), which is then dephosphorylated to form the acireductone 1,2-dihydroxy-3-keto-5-methylthiopentene (DHK-MTPene).</text>
</comment>
<comment type="catalytic activity">
    <reaction evidence="1">
        <text>5-methylsulfanyl-2,3-dioxopentyl phosphate + H2O = 1,2-dihydroxy-5-(methylsulfanyl)pent-1-en-3-one + phosphate</text>
        <dbReference type="Rhea" id="RHEA:21700"/>
        <dbReference type="ChEBI" id="CHEBI:15377"/>
        <dbReference type="ChEBI" id="CHEBI:43474"/>
        <dbReference type="ChEBI" id="CHEBI:49252"/>
        <dbReference type="ChEBI" id="CHEBI:58828"/>
        <dbReference type="EC" id="3.1.3.77"/>
    </reaction>
</comment>
<comment type="cofactor">
    <cofactor evidence="1">
        <name>Mg(2+)</name>
        <dbReference type="ChEBI" id="CHEBI:18420"/>
    </cofactor>
    <text evidence="1">Binds 1 Mg(2+) ion per subunit.</text>
</comment>
<comment type="pathway">
    <text evidence="1">Amino-acid biosynthesis; L-methionine biosynthesis via salvage pathway; L-methionine from S-methyl-5-thio-alpha-D-ribose 1-phosphate: step 3/6.</text>
</comment>
<comment type="pathway">
    <text evidence="1">Amino-acid biosynthesis; L-methionine biosynthesis via salvage pathway; L-methionine from S-methyl-5-thio-alpha-D-ribose 1-phosphate: step 4/6.</text>
</comment>
<comment type="subunit">
    <text evidence="1">Monomer.</text>
</comment>
<comment type="similarity">
    <text evidence="1">Belongs to the HAD-like hydrolase superfamily. MasA/MtnC family.</text>
</comment>
<organism>
    <name type="scientific">Aquifex aeolicus (strain VF5)</name>
    <dbReference type="NCBI Taxonomy" id="224324"/>
    <lineage>
        <taxon>Bacteria</taxon>
        <taxon>Pseudomonadati</taxon>
        <taxon>Aquificota</taxon>
        <taxon>Aquificia</taxon>
        <taxon>Aquificales</taxon>
        <taxon>Aquificaceae</taxon>
        <taxon>Aquifex</taxon>
    </lineage>
</organism>
<evidence type="ECO:0000255" key="1">
    <source>
        <dbReference type="HAMAP-Rule" id="MF_01681"/>
    </source>
</evidence>
<reference key="1">
    <citation type="journal article" date="1998" name="Nature">
        <title>The complete genome of the hyperthermophilic bacterium Aquifex aeolicus.</title>
        <authorList>
            <person name="Deckert G."/>
            <person name="Warren P.V."/>
            <person name="Gaasterland T."/>
            <person name="Young W.G."/>
            <person name="Lenox A.L."/>
            <person name="Graham D.E."/>
            <person name="Overbeek R."/>
            <person name="Snead M.A."/>
            <person name="Keller M."/>
            <person name="Aujay M."/>
            <person name="Huber R."/>
            <person name="Feldman R.A."/>
            <person name="Short J.M."/>
            <person name="Olsen G.J."/>
            <person name="Swanson R.V."/>
        </authorList>
    </citation>
    <scope>NUCLEOTIDE SEQUENCE [LARGE SCALE GENOMIC DNA]</scope>
    <source>
        <strain>VF5</strain>
    </source>
</reference>
<accession>O67786</accession>
<protein>
    <recommendedName>
        <fullName evidence="1">Enolase-phosphatase E1</fullName>
        <ecNumber evidence="1">3.1.3.77</ecNumber>
    </recommendedName>
    <alternativeName>
        <fullName evidence="1">2,3-diketo-5-methylthio-1-phosphopentane phosphatase</fullName>
    </alternativeName>
</protein>
<keyword id="KW-0028">Amino-acid biosynthesis</keyword>
<keyword id="KW-0378">Hydrolase</keyword>
<keyword id="KW-0460">Magnesium</keyword>
<keyword id="KW-0479">Metal-binding</keyword>
<keyword id="KW-0486">Methionine biosynthesis</keyword>
<keyword id="KW-1185">Reference proteome</keyword>
<sequence length="223" mass="25794">MVKAILLDIEGTIAPLSFVKEVMFPYSKKKLREFLEKNWEKPEIKKIVQEVEKIEGRELSLEEAVQLFSRWIDEDRKITPLKELQGHIWEEGFKSGELKAPLYEDAYEKIKEWKEKGIPVYIYSSGSVKAQNLFFGHSVYGDIRNLFSGFFDTKIGSKRERSSYEKIAKEIGLPPHEILFISDNPEELKAAKEAGMKVIQSVREGVEPSGDFEKITSFRELEI</sequence>
<dbReference type="EC" id="3.1.3.77" evidence="1"/>
<dbReference type="EMBL" id="AE000657">
    <property type="protein sequence ID" value="AAC07754.1"/>
    <property type="molecule type" value="Genomic_DNA"/>
</dbReference>
<dbReference type="PIR" id="F70469">
    <property type="entry name" value="F70469"/>
</dbReference>
<dbReference type="RefSeq" id="NP_214355.1">
    <property type="nucleotide sequence ID" value="NC_000918.1"/>
</dbReference>
<dbReference type="RefSeq" id="WP_010881291.1">
    <property type="nucleotide sequence ID" value="NC_000918.1"/>
</dbReference>
<dbReference type="SMR" id="O67786"/>
<dbReference type="STRING" id="224324.aq_1977"/>
<dbReference type="EnsemblBacteria" id="AAC07754">
    <property type="protein sequence ID" value="AAC07754"/>
    <property type="gene ID" value="aq_1977"/>
</dbReference>
<dbReference type="KEGG" id="aae:aq_1977"/>
<dbReference type="PATRIC" id="fig|224324.8.peg.1526"/>
<dbReference type="eggNOG" id="COG4229">
    <property type="taxonomic scope" value="Bacteria"/>
</dbReference>
<dbReference type="HOGENOM" id="CLU_023273_0_0_0"/>
<dbReference type="InParanoid" id="O67786"/>
<dbReference type="OrthoDB" id="9809962at2"/>
<dbReference type="UniPathway" id="UPA00904">
    <property type="reaction ID" value="UER00876"/>
</dbReference>
<dbReference type="UniPathway" id="UPA00904">
    <property type="reaction ID" value="UER00877"/>
</dbReference>
<dbReference type="Proteomes" id="UP000000798">
    <property type="component" value="Chromosome"/>
</dbReference>
<dbReference type="GO" id="GO:0043715">
    <property type="term" value="F:2,3-diketo-5-methylthiopentyl-1-phosphate enolase activity"/>
    <property type="evidence" value="ECO:0007669"/>
    <property type="project" value="UniProtKB-UniRule"/>
</dbReference>
<dbReference type="GO" id="GO:0043716">
    <property type="term" value="F:2-hydroxy-3-keto-5-methylthiopentenyl-1-phosphate phosphatase activity"/>
    <property type="evidence" value="ECO:0007669"/>
    <property type="project" value="UniProtKB-UniRule"/>
</dbReference>
<dbReference type="GO" id="GO:0043874">
    <property type="term" value="F:acireductone synthase activity"/>
    <property type="evidence" value="ECO:0000318"/>
    <property type="project" value="GO_Central"/>
</dbReference>
<dbReference type="GO" id="GO:0000287">
    <property type="term" value="F:magnesium ion binding"/>
    <property type="evidence" value="ECO:0007669"/>
    <property type="project" value="UniProtKB-UniRule"/>
</dbReference>
<dbReference type="GO" id="GO:0019509">
    <property type="term" value="P:L-methionine salvage from methylthioadenosine"/>
    <property type="evidence" value="ECO:0000318"/>
    <property type="project" value="GO_Central"/>
</dbReference>
<dbReference type="CDD" id="cd01629">
    <property type="entry name" value="HAD_EP"/>
    <property type="match status" value="1"/>
</dbReference>
<dbReference type="FunFam" id="3.40.50.1000:FF:000079">
    <property type="entry name" value="Enolase-phosphatase E1"/>
    <property type="match status" value="1"/>
</dbReference>
<dbReference type="Gene3D" id="1.10.720.60">
    <property type="match status" value="1"/>
</dbReference>
<dbReference type="Gene3D" id="3.40.50.1000">
    <property type="entry name" value="HAD superfamily/HAD-like"/>
    <property type="match status" value="1"/>
</dbReference>
<dbReference type="HAMAP" id="MF_01681">
    <property type="entry name" value="Salvage_MtnC"/>
    <property type="match status" value="1"/>
</dbReference>
<dbReference type="InterPro" id="IPR023943">
    <property type="entry name" value="Enolase-ppase_E1"/>
</dbReference>
<dbReference type="InterPro" id="IPR036412">
    <property type="entry name" value="HAD-like_sf"/>
</dbReference>
<dbReference type="InterPro" id="IPR006439">
    <property type="entry name" value="HAD-SF_hydro_IA"/>
</dbReference>
<dbReference type="InterPro" id="IPR023214">
    <property type="entry name" value="HAD_sf"/>
</dbReference>
<dbReference type="NCBIfam" id="TIGR01691">
    <property type="entry name" value="enolase-ppase"/>
    <property type="match status" value="1"/>
</dbReference>
<dbReference type="NCBIfam" id="TIGR01549">
    <property type="entry name" value="HAD-SF-IA-v1"/>
    <property type="match status" value="1"/>
</dbReference>
<dbReference type="NCBIfam" id="TIGR01509">
    <property type="entry name" value="HAD-SF-IA-v3"/>
    <property type="match status" value="1"/>
</dbReference>
<dbReference type="PANTHER" id="PTHR20371">
    <property type="entry name" value="ENOLASE-PHOSPHATASE E1"/>
    <property type="match status" value="1"/>
</dbReference>
<dbReference type="PANTHER" id="PTHR20371:SF1">
    <property type="entry name" value="ENOLASE-PHOSPHATASE E1"/>
    <property type="match status" value="1"/>
</dbReference>
<dbReference type="Pfam" id="PF00702">
    <property type="entry name" value="Hydrolase"/>
    <property type="match status" value="1"/>
</dbReference>
<dbReference type="SFLD" id="SFLDF00044">
    <property type="entry name" value="enolase-phosphatase"/>
    <property type="match status" value="1"/>
</dbReference>
<dbReference type="SFLD" id="SFLDS00003">
    <property type="entry name" value="Haloacid_Dehalogenase"/>
    <property type="match status" value="1"/>
</dbReference>
<dbReference type="SUPFAM" id="SSF56784">
    <property type="entry name" value="HAD-like"/>
    <property type="match status" value="1"/>
</dbReference>
<gene>
    <name evidence="1" type="primary">mtnC</name>
    <name type="ordered locus">aq_1977</name>
</gene>
<proteinExistence type="inferred from homology"/>